<accession>A9VIS4</accession>
<name>MINC_BACMK</name>
<dbReference type="EMBL" id="CP000903">
    <property type="protein sequence ID" value="ABY45454.1"/>
    <property type="molecule type" value="Genomic_DNA"/>
</dbReference>
<dbReference type="RefSeq" id="WP_002015372.1">
    <property type="nucleotide sequence ID" value="NC_010184.1"/>
</dbReference>
<dbReference type="SMR" id="A9VIS4"/>
<dbReference type="GeneID" id="66265983"/>
<dbReference type="KEGG" id="bwe:BcerKBAB4_4295"/>
<dbReference type="eggNOG" id="COG0850">
    <property type="taxonomic scope" value="Bacteria"/>
</dbReference>
<dbReference type="HOGENOM" id="CLU_048711_1_1_9"/>
<dbReference type="Proteomes" id="UP000002154">
    <property type="component" value="Chromosome"/>
</dbReference>
<dbReference type="GO" id="GO:0000902">
    <property type="term" value="P:cell morphogenesis"/>
    <property type="evidence" value="ECO:0007669"/>
    <property type="project" value="InterPro"/>
</dbReference>
<dbReference type="GO" id="GO:0000917">
    <property type="term" value="P:division septum assembly"/>
    <property type="evidence" value="ECO:0007669"/>
    <property type="project" value="UniProtKB-KW"/>
</dbReference>
<dbReference type="GO" id="GO:1901891">
    <property type="term" value="P:regulation of cell septum assembly"/>
    <property type="evidence" value="ECO:0007669"/>
    <property type="project" value="InterPro"/>
</dbReference>
<dbReference type="FunFam" id="2.160.20.70:FF:000003">
    <property type="entry name" value="Probable septum site-determining protein MinC"/>
    <property type="match status" value="1"/>
</dbReference>
<dbReference type="FunFam" id="3.30.160.540:FF:000001">
    <property type="entry name" value="Probable septum site-determining protein MinC"/>
    <property type="match status" value="1"/>
</dbReference>
<dbReference type="Gene3D" id="2.160.20.70">
    <property type="match status" value="1"/>
</dbReference>
<dbReference type="Gene3D" id="3.30.160.540">
    <property type="match status" value="1"/>
</dbReference>
<dbReference type="HAMAP" id="MF_00267">
    <property type="entry name" value="MinC"/>
    <property type="match status" value="1"/>
</dbReference>
<dbReference type="InterPro" id="IPR016098">
    <property type="entry name" value="CAP/MinC_C"/>
</dbReference>
<dbReference type="InterPro" id="IPR013033">
    <property type="entry name" value="MinC"/>
</dbReference>
<dbReference type="InterPro" id="IPR036145">
    <property type="entry name" value="MinC_C_sf"/>
</dbReference>
<dbReference type="InterPro" id="IPR055219">
    <property type="entry name" value="MinC_N_1"/>
</dbReference>
<dbReference type="InterPro" id="IPR005526">
    <property type="entry name" value="Septum_form_inhib_MinC_C"/>
</dbReference>
<dbReference type="NCBIfam" id="TIGR01222">
    <property type="entry name" value="minC"/>
    <property type="match status" value="1"/>
</dbReference>
<dbReference type="PANTHER" id="PTHR34108">
    <property type="entry name" value="SEPTUM SITE-DETERMINING PROTEIN MINC"/>
    <property type="match status" value="1"/>
</dbReference>
<dbReference type="PANTHER" id="PTHR34108:SF1">
    <property type="entry name" value="SEPTUM SITE-DETERMINING PROTEIN MINC"/>
    <property type="match status" value="1"/>
</dbReference>
<dbReference type="Pfam" id="PF03775">
    <property type="entry name" value="MinC_C"/>
    <property type="match status" value="1"/>
</dbReference>
<dbReference type="Pfam" id="PF22642">
    <property type="entry name" value="MinC_N_1"/>
    <property type="match status" value="1"/>
</dbReference>
<dbReference type="SUPFAM" id="SSF63848">
    <property type="entry name" value="Cell-division inhibitor MinC, C-terminal domain"/>
    <property type="match status" value="1"/>
</dbReference>
<reference key="1">
    <citation type="journal article" date="2008" name="Chem. Biol. Interact.">
        <title>Extending the Bacillus cereus group genomics to putative food-borne pathogens of different toxicity.</title>
        <authorList>
            <person name="Lapidus A."/>
            <person name="Goltsman E."/>
            <person name="Auger S."/>
            <person name="Galleron N."/>
            <person name="Segurens B."/>
            <person name="Dossat C."/>
            <person name="Land M.L."/>
            <person name="Broussolle V."/>
            <person name="Brillard J."/>
            <person name="Guinebretiere M.-H."/>
            <person name="Sanchis V."/>
            <person name="Nguen-the C."/>
            <person name="Lereclus D."/>
            <person name="Richardson P."/>
            <person name="Wincker P."/>
            <person name="Weissenbach J."/>
            <person name="Ehrlich S.D."/>
            <person name="Sorokin A."/>
        </authorList>
    </citation>
    <scope>NUCLEOTIDE SEQUENCE [LARGE SCALE GENOMIC DNA]</scope>
    <source>
        <strain>KBAB4</strain>
    </source>
</reference>
<keyword id="KW-0131">Cell cycle</keyword>
<keyword id="KW-0132">Cell division</keyword>
<keyword id="KW-0717">Septation</keyword>
<sequence>MEEKKQQNVTIKGTKDGITLHLDDCCSFSELLKELDEKLSTHYYESDGRSLIEVRVKVGNRYLTEVQQEEIRTLIRNKKNLVVESIESDVITKAEAIAWKEETEIVPISKIVRSGQVLHVKGNLLLIGDVNPGGTVIAGGNIFVLGSLRGIAHAGYDGDSEAVIAASIMNPMQLRISDVTMRAPEEKEDGAEAAECAYINENNHIVVDRLQLLTHLRPNLTKLERGIV</sequence>
<proteinExistence type="inferred from homology"/>
<comment type="function">
    <text evidence="1">Cell division inhibitor that blocks the formation of polar Z ring septums. Rapidly oscillates between the poles of the cell to destabilize FtsZ filaments that have formed before they mature into polar Z rings. Prevents FtsZ polymerization.</text>
</comment>
<comment type="subunit">
    <text evidence="1">Interacts with MinD and FtsZ.</text>
</comment>
<comment type="similarity">
    <text evidence="1">Belongs to the MinC family.</text>
</comment>
<protein>
    <recommendedName>
        <fullName evidence="1">Probable septum site-determining protein MinC</fullName>
    </recommendedName>
</protein>
<gene>
    <name evidence="1" type="primary">minC</name>
    <name type="ordered locus">BcerKBAB4_4295</name>
</gene>
<organism>
    <name type="scientific">Bacillus mycoides (strain KBAB4)</name>
    <name type="common">Bacillus weihenstephanensis</name>
    <dbReference type="NCBI Taxonomy" id="315730"/>
    <lineage>
        <taxon>Bacteria</taxon>
        <taxon>Bacillati</taxon>
        <taxon>Bacillota</taxon>
        <taxon>Bacilli</taxon>
        <taxon>Bacillales</taxon>
        <taxon>Bacillaceae</taxon>
        <taxon>Bacillus</taxon>
        <taxon>Bacillus cereus group</taxon>
    </lineage>
</organism>
<feature type="chain" id="PRO_1000114266" description="Probable septum site-determining protein MinC">
    <location>
        <begin position="1"/>
        <end position="228"/>
    </location>
</feature>
<evidence type="ECO:0000255" key="1">
    <source>
        <dbReference type="HAMAP-Rule" id="MF_00267"/>
    </source>
</evidence>